<protein>
    <recommendedName>
        <fullName evidence="1">Peptide chain release factor 1</fullName>
        <shortName evidence="1">RF-1</shortName>
    </recommendedName>
</protein>
<organism>
    <name type="scientific">Burkholderia pseudomallei (strain K96243)</name>
    <dbReference type="NCBI Taxonomy" id="272560"/>
    <lineage>
        <taxon>Bacteria</taxon>
        <taxon>Pseudomonadati</taxon>
        <taxon>Pseudomonadota</taxon>
        <taxon>Betaproteobacteria</taxon>
        <taxon>Burkholderiales</taxon>
        <taxon>Burkholderiaceae</taxon>
        <taxon>Burkholderia</taxon>
        <taxon>pseudomallei group</taxon>
    </lineage>
</organism>
<sequence>MKTSMQSKLDQLTTRLAELNDLLSRENVTADLDQYRKLTREHAEIGPVVEHYAQWRQARADELAAQELLADASMRDFAEDELRGARDRMGRLAAELQTMLLPKDPNDERNIFVEIRAGTGGDESALFAGDLLRMYLRYAERQRWQVEMMSESPSDLGGYKEVIVRIAGYGAYSRLKFESGGHRVQRVPATETQGRIHTSACTVAVMPEADEIGEVEINPADLRIDTFRASGAGGQHINKTDSAVRVTHIPTGIVVECQDDRSQHKNKDRALKVLAARIKDKQYHEQHAKEAATRKSLIGSGDRSERIRTYNFPQGRMTDHRINLTLYKLEQIMDGDLDELIAALVSEHQAELLASLGDAE</sequence>
<reference key="1">
    <citation type="journal article" date="2004" name="Proc. Natl. Acad. Sci. U.S.A.">
        <title>Genomic plasticity of the causative agent of melioidosis, Burkholderia pseudomallei.</title>
        <authorList>
            <person name="Holden M.T.G."/>
            <person name="Titball R.W."/>
            <person name="Peacock S.J."/>
            <person name="Cerdeno-Tarraga A.-M."/>
            <person name="Atkins T."/>
            <person name="Crossman L.C."/>
            <person name="Pitt T."/>
            <person name="Churcher C."/>
            <person name="Mungall K.L."/>
            <person name="Bentley S.D."/>
            <person name="Sebaihia M."/>
            <person name="Thomson N.R."/>
            <person name="Bason N."/>
            <person name="Beacham I.R."/>
            <person name="Brooks K."/>
            <person name="Brown K.A."/>
            <person name="Brown N.F."/>
            <person name="Challis G.L."/>
            <person name="Cherevach I."/>
            <person name="Chillingworth T."/>
            <person name="Cronin A."/>
            <person name="Crossett B."/>
            <person name="Davis P."/>
            <person name="DeShazer D."/>
            <person name="Feltwell T."/>
            <person name="Fraser A."/>
            <person name="Hance Z."/>
            <person name="Hauser H."/>
            <person name="Holroyd S."/>
            <person name="Jagels K."/>
            <person name="Keith K.E."/>
            <person name="Maddison M."/>
            <person name="Moule S."/>
            <person name="Price C."/>
            <person name="Quail M.A."/>
            <person name="Rabbinowitsch E."/>
            <person name="Rutherford K."/>
            <person name="Sanders M."/>
            <person name="Simmonds M."/>
            <person name="Songsivilai S."/>
            <person name="Stevens K."/>
            <person name="Tumapa S."/>
            <person name="Vesaratchavest M."/>
            <person name="Whitehead S."/>
            <person name="Yeats C."/>
            <person name="Barrell B.G."/>
            <person name="Oyston P.C.F."/>
            <person name="Parkhill J."/>
        </authorList>
    </citation>
    <scope>NUCLEOTIDE SEQUENCE [LARGE SCALE GENOMIC DNA]</scope>
    <source>
        <strain>K96243</strain>
    </source>
</reference>
<accession>Q63QF0</accession>
<feature type="chain" id="PRO_0000177650" description="Peptide chain release factor 1">
    <location>
        <begin position="1"/>
        <end position="360"/>
    </location>
</feature>
<feature type="modified residue" description="N5-methylglutamine" evidence="1">
    <location>
        <position position="235"/>
    </location>
</feature>
<comment type="function">
    <text evidence="1">Peptide chain release factor 1 directs the termination of translation in response to the peptide chain termination codons UAG and UAA.</text>
</comment>
<comment type="subcellular location">
    <subcellularLocation>
        <location evidence="1">Cytoplasm</location>
    </subcellularLocation>
</comment>
<comment type="PTM">
    <text evidence="1">Methylated by PrmC. Methylation increases the termination efficiency of RF1.</text>
</comment>
<comment type="similarity">
    <text evidence="1">Belongs to the prokaryotic/mitochondrial release factor family.</text>
</comment>
<evidence type="ECO:0000255" key="1">
    <source>
        <dbReference type="HAMAP-Rule" id="MF_00093"/>
    </source>
</evidence>
<name>RF1_BURPS</name>
<gene>
    <name evidence="1" type="primary">prfA</name>
    <name type="ordered locus">BPSL3073</name>
</gene>
<proteinExistence type="inferred from homology"/>
<dbReference type="EMBL" id="BX571965">
    <property type="protein sequence ID" value="CAH37084.1"/>
    <property type="molecule type" value="Genomic_DNA"/>
</dbReference>
<dbReference type="RefSeq" id="WP_004527811.1">
    <property type="nucleotide sequence ID" value="NZ_CP009538.1"/>
</dbReference>
<dbReference type="RefSeq" id="YP_109668.1">
    <property type="nucleotide sequence ID" value="NC_006350.1"/>
</dbReference>
<dbReference type="SMR" id="Q63QF0"/>
<dbReference type="STRING" id="272560.BPSL3073"/>
<dbReference type="GeneID" id="93061687"/>
<dbReference type="KEGG" id="bps:BPSL3073"/>
<dbReference type="PATRIC" id="fig|272560.51.peg.2181"/>
<dbReference type="eggNOG" id="COG0216">
    <property type="taxonomic scope" value="Bacteria"/>
</dbReference>
<dbReference type="Proteomes" id="UP000000605">
    <property type="component" value="Chromosome 1"/>
</dbReference>
<dbReference type="GO" id="GO:0005737">
    <property type="term" value="C:cytoplasm"/>
    <property type="evidence" value="ECO:0007669"/>
    <property type="project" value="UniProtKB-SubCell"/>
</dbReference>
<dbReference type="GO" id="GO:0016149">
    <property type="term" value="F:translation release factor activity, codon specific"/>
    <property type="evidence" value="ECO:0007669"/>
    <property type="project" value="UniProtKB-UniRule"/>
</dbReference>
<dbReference type="FunFam" id="3.30.160.20:FF:000004">
    <property type="entry name" value="Peptide chain release factor 1"/>
    <property type="match status" value="1"/>
</dbReference>
<dbReference type="FunFam" id="3.30.70.1660:FF:000002">
    <property type="entry name" value="Peptide chain release factor 1"/>
    <property type="match status" value="1"/>
</dbReference>
<dbReference type="FunFam" id="3.30.70.1660:FF:000004">
    <property type="entry name" value="Peptide chain release factor 1"/>
    <property type="match status" value="1"/>
</dbReference>
<dbReference type="Gene3D" id="3.30.160.20">
    <property type="match status" value="1"/>
</dbReference>
<dbReference type="Gene3D" id="3.30.70.1660">
    <property type="match status" value="1"/>
</dbReference>
<dbReference type="Gene3D" id="6.10.140.1950">
    <property type="match status" value="1"/>
</dbReference>
<dbReference type="HAMAP" id="MF_00093">
    <property type="entry name" value="Rel_fac_1"/>
    <property type="match status" value="1"/>
</dbReference>
<dbReference type="InterPro" id="IPR005139">
    <property type="entry name" value="PCRF"/>
</dbReference>
<dbReference type="InterPro" id="IPR000352">
    <property type="entry name" value="Pep_chain_release_fac_I"/>
</dbReference>
<dbReference type="InterPro" id="IPR045853">
    <property type="entry name" value="Pep_chain_release_fac_I_sf"/>
</dbReference>
<dbReference type="InterPro" id="IPR050057">
    <property type="entry name" value="Prokaryotic/Mito_RF"/>
</dbReference>
<dbReference type="InterPro" id="IPR004373">
    <property type="entry name" value="RF-1"/>
</dbReference>
<dbReference type="NCBIfam" id="TIGR00019">
    <property type="entry name" value="prfA"/>
    <property type="match status" value="1"/>
</dbReference>
<dbReference type="NCBIfam" id="NF001859">
    <property type="entry name" value="PRK00591.1"/>
    <property type="match status" value="1"/>
</dbReference>
<dbReference type="PANTHER" id="PTHR43804">
    <property type="entry name" value="LD18447P"/>
    <property type="match status" value="1"/>
</dbReference>
<dbReference type="PANTHER" id="PTHR43804:SF7">
    <property type="entry name" value="LD18447P"/>
    <property type="match status" value="1"/>
</dbReference>
<dbReference type="Pfam" id="PF03462">
    <property type="entry name" value="PCRF"/>
    <property type="match status" value="1"/>
</dbReference>
<dbReference type="Pfam" id="PF00472">
    <property type="entry name" value="RF-1"/>
    <property type="match status" value="1"/>
</dbReference>
<dbReference type="SMART" id="SM00937">
    <property type="entry name" value="PCRF"/>
    <property type="match status" value="1"/>
</dbReference>
<dbReference type="SUPFAM" id="SSF75620">
    <property type="entry name" value="Release factor"/>
    <property type="match status" value="1"/>
</dbReference>
<dbReference type="PROSITE" id="PS00745">
    <property type="entry name" value="RF_PROK_I"/>
    <property type="match status" value="1"/>
</dbReference>
<keyword id="KW-0963">Cytoplasm</keyword>
<keyword id="KW-0488">Methylation</keyword>
<keyword id="KW-0648">Protein biosynthesis</keyword>
<keyword id="KW-1185">Reference proteome</keyword>